<accession>Q3KSP4</accession>
<sequence>MALQTDTQAWRVGIGTRGLMFSNCVPLHLPEGQYHKLRLPVSAYEALAVARYGLVGSLWEVPAVNSALQCLAAAAPCKDVKIYPSCIFQVHAPMFVTIKTSLRCLNPHDLCLCLICVGAAILDIPLLCAPRDGAGARAAEGQAAAAKGGKLRVWGRLSPSSPTSLSLAFPYAGPPPVAWYRHYIKLTRSEGVGIGKDCAQDHACPVPPQGHASSAADQAGVPERGRKRAHEGPEAGEAASTGRGDVALSQSRALLWRGLGWDTGRGRLAPGLAMSRDAASGSVHLDIQVDRAEEGWVCDVLLEPGPPTAREGCFLSMDPGLVTMKDAWTLFPLHPEHDAVVPPKEEIHVMAQGHLQGGTPSLWGFTFQEAACDQWVLRPRVWTAHSPIKMTVYNCGHKPLHIGPSTRLGLALFWPAERSDNLDAGRIFYQLTSGELYWGRTVARPPTLTLPVDELRPWPKLTPEEPMQH</sequence>
<proteinExistence type="inferred from homology"/>
<organismHost>
    <name type="scientific">Homo sapiens</name>
    <name type="common">Human</name>
    <dbReference type="NCBI Taxonomy" id="9606"/>
</organismHost>
<feature type="chain" id="PRO_0000382448" description="Uncharacterized LF1 protein">
    <location>
        <begin position="1"/>
        <end position="469"/>
    </location>
</feature>
<feature type="region of interest" description="Disordered" evidence="1">
    <location>
        <begin position="203"/>
        <end position="245"/>
    </location>
</feature>
<evidence type="ECO:0000256" key="1">
    <source>
        <dbReference type="SAM" id="MobiDB-lite"/>
    </source>
</evidence>
<evidence type="ECO:0000305" key="2"/>
<name>LF1_EBVG</name>
<dbReference type="EMBL" id="AY961628">
    <property type="protein sequence ID" value="ABA06395.1"/>
    <property type="molecule type" value="Genomic_DNA"/>
</dbReference>
<dbReference type="Proteomes" id="UP000007641">
    <property type="component" value="Genome"/>
</dbReference>
<dbReference type="InterPro" id="IPR006882">
    <property type="entry name" value="Herpes_Orf11"/>
</dbReference>
<dbReference type="Pfam" id="PF04797">
    <property type="entry name" value="Herpes_ORF11"/>
    <property type="match status" value="1"/>
</dbReference>
<reference key="1">
    <citation type="journal article" date="2005" name="J. Virol.">
        <title>Genomic sequence analysis of Epstein-Barr virus strain GD1 from a nasopharyngeal carcinoma patient.</title>
        <authorList>
            <person name="Zeng M.-S."/>
            <person name="Li D.-J."/>
            <person name="Liu Q.-L."/>
            <person name="Song L.-B."/>
            <person name="Li M.-Z."/>
            <person name="Zhang R.-H."/>
            <person name="Yu X.-J."/>
            <person name="Wang H.-M."/>
            <person name="Ernberg I."/>
            <person name="Zeng Y.-X."/>
        </authorList>
    </citation>
    <scope>NUCLEOTIDE SEQUENCE [LARGE SCALE GENOMIC DNA]</scope>
    <source>
        <strain>Raji</strain>
    </source>
</reference>
<gene>
    <name type="primary">LF1</name>
</gene>
<organism>
    <name type="scientific">Epstein-Barr virus (strain GD1)</name>
    <name type="common">HHV-4</name>
    <name type="synonym">Human gammaherpesvirus 4</name>
    <dbReference type="NCBI Taxonomy" id="10376"/>
    <lineage>
        <taxon>Viruses</taxon>
        <taxon>Duplodnaviria</taxon>
        <taxon>Heunggongvirae</taxon>
        <taxon>Peploviricota</taxon>
        <taxon>Herviviricetes</taxon>
        <taxon>Herpesvirales</taxon>
        <taxon>Orthoherpesviridae</taxon>
        <taxon>Gammaherpesvirinae</taxon>
        <taxon>Lymphocryptovirus</taxon>
        <taxon>Lymphocryptovirus humangamma4</taxon>
    </lineage>
</organism>
<comment type="miscellaneous">
    <text>LF1 is absent in strain B95-8.</text>
</comment>
<comment type="similarity">
    <text evidence="2">Belongs to the epstein-barr virus LF1 family.</text>
</comment>
<protein>
    <recommendedName>
        <fullName>Uncharacterized LF1 protein</fullName>
    </recommendedName>
</protein>